<gene>
    <name type="ordered locus">Shew_1122</name>
</gene>
<organism>
    <name type="scientific">Shewanella loihica (strain ATCC BAA-1088 / PV-4)</name>
    <dbReference type="NCBI Taxonomy" id="323850"/>
    <lineage>
        <taxon>Bacteria</taxon>
        <taxon>Pseudomonadati</taxon>
        <taxon>Pseudomonadota</taxon>
        <taxon>Gammaproteobacteria</taxon>
        <taxon>Alteromonadales</taxon>
        <taxon>Shewanellaceae</taxon>
        <taxon>Shewanella</taxon>
    </lineage>
</organism>
<sequence>MARTVNCQYLKKEADGLAFQLYPGELGKRIFDNISQEAWSLWQAKQTMLINEKKLNMMNVDDRKFLEEQMVNFLFEGKEVEIEGYVPQKDDE</sequence>
<protein>
    <recommendedName>
        <fullName evidence="1">Probable Fe(2+)-trafficking protein</fullName>
    </recommendedName>
</protein>
<accession>A3QBZ5</accession>
<feature type="chain" id="PRO_1000045065" description="Probable Fe(2+)-trafficking protein">
    <location>
        <begin position="1"/>
        <end position="92"/>
    </location>
</feature>
<keyword id="KW-0408">Iron</keyword>
<keyword id="KW-1185">Reference proteome</keyword>
<dbReference type="EMBL" id="CP000606">
    <property type="protein sequence ID" value="ABO22993.1"/>
    <property type="molecule type" value="Genomic_DNA"/>
</dbReference>
<dbReference type="RefSeq" id="WP_011864926.1">
    <property type="nucleotide sequence ID" value="NC_009092.1"/>
</dbReference>
<dbReference type="SMR" id="A3QBZ5"/>
<dbReference type="STRING" id="323850.Shew_1122"/>
<dbReference type="KEGG" id="slo:Shew_1122"/>
<dbReference type="eggNOG" id="COG2924">
    <property type="taxonomic scope" value="Bacteria"/>
</dbReference>
<dbReference type="HOGENOM" id="CLU_170994_0_0_6"/>
<dbReference type="OrthoDB" id="9804318at2"/>
<dbReference type="Proteomes" id="UP000001558">
    <property type="component" value="Chromosome"/>
</dbReference>
<dbReference type="GO" id="GO:0005829">
    <property type="term" value="C:cytosol"/>
    <property type="evidence" value="ECO:0007669"/>
    <property type="project" value="TreeGrafter"/>
</dbReference>
<dbReference type="GO" id="GO:0005506">
    <property type="term" value="F:iron ion binding"/>
    <property type="evidence" value="ECO:0007669"/>
    <property type="project" value="UniProtKB-UniRule"/>
</dbReference>
<dbReference type="GO" id="GO:0034599">
    <property type="term" value="P:cellular response to oxidative stress"/>
    <property type="evidence" value="ECO:0007669"/>
    <property type="project" value="TreeGrafter"/>
</dbReference>
<dbReference type="FunFam" id="1.10.3880.10:FF:000001">
    <property type="entry name" value="Probable Fe(2+)-trafficking protein"/>
    <property type="match status" value="1"/>
</dbReference>
<dbReference type="Gene3D" id="1.10.3880.10">
    <property type="entry name" value="Fe(II) trafficking protein YggX"/>
    <property type="match status" value="1"/>
</dbReference>
<dbReference type="HAMAP" id="MF_00686">
    <property type="entry name" value="Fe_traffic_YggX"/>
    <property type="match status" value="1"/>
</dbReference>
<dbReference type="InterPro" id="IPR007457">
    <property type="entry name" value="Fe_traffick_prot_YggX"/>
</dbReference>
<dbReference type="InterPro" id="IPR036766">
    <property type="entry name" value="Fe_traffick_prot_YggX_sf"/>
</dbReference>
<dbReference type="NCBIfam" id="NF003817">
    <property type="entry name" value="PRK05408.1"/>
    <property type="match status" value="1"/>
</dbReference>
<dbReference type="PANTHER" id="PTHR36965">
    <property type="entry name" value="FE(2+)-TRAFFICKING PROTEIN-RELATED"/>
    <property type="match status" value="1"/>
</dbReference>
<dbReference type="PANTHER" id="PTHR36965:SF1">
    <property type="entry name" value="FE(2+)-TRAFFICKING PROTEIN-RELATED"/>
    <property type="match status" value="1"/>
</dbReference>
<dbReference type="Pfam" id="PF04362">
    <property type="entry name" value="Iron_traffic"/>
    <property type="match status" value="1"/>
</dbReference>
<dbReference type="PIRSF" id="PIRSF029827">
    <property type="entry name" value="Fe_traffic_YggX"/>
    <property type="match status" value="1"/>
</dbReference>
<dbReference type="SUPFAM" id="SSF111148">
    <property type="entry name" value="YggX-like"/>
    <property type="match status" value="1"/>
</dbReference>
<name>FETP_SHELP</name>
<evidence type="ECO:0000255" key="1">
    <source>
        <dbReference type="HAMAP-Rule" id="MF_00686"/>
    </source>
</evidence>
<proteinExistence type="inferred from homology"/>
<comment type="function">
    <text evidence="1">Could be a mediator in iron transactions between iron acquisition and iron-requiring processes, such as synthesis and/or repair of Fe-S clusters in biosynthetic enzymes.</text>
</comment>
<comment type="similarity">
    <text evidence="1">Belongs to the Fe(2+)-trafficking protein family.</text>
</comment>
<reference key="1">
    <citation type="submission" date="2007-03" db="EMBL/GenBank/DDBJ databases">
        <title>Complete sequence of Shewanella loihica PV-4.</title>
        <authorList>
            <consortium name="US DOE Joint Genome Institute"/>
            <person name="Copeland A."/>
            <person name="Lucas S."/>
            <person name="Lapidus A."/>
            <person name="Barry K."/>
            <person name="Detter J.C."/>
            <person name="Glavina del Rio T."/>
            <person name="Hammon N."/>
            <person name="Israni S."/>
            <person name="Dalin E."/>
            <person name="Tice H."/>
            <person name="Pitluck S."/>
            <person name="Chain P."/>
            <person name="Malfatti S."/>
            <person name="Shin M."/>
            <person name="Vergez L."/>
            <person name="Schmutz J."/>
            <person name="Larimer F."/>
            <person name="Land M."/>
            <person name="Hauser L."/>
            <person name="Kyrpides N."/>
            <person name="Mikhailova N."/>
            <person name="Romine M.F."/>
            <person name="Serres G."/>
            <person name="Fredrickson J."/>
            <person name="Tiedje J."/>
            <person name="Richardson P."/>
        </authorList>
    </citation>
    <scope>NUCLEOTIDE SEQUENCE [LARGE SCALE GENOMIC DNA]</scope>
    <source>
        <strain>ATCC BAA-1088 / PV-4</strain>
    </source>
</reference>